<comment type="function">
    <text evidence="3">Probable neurotoxin.</text>
</comment>
<comment type="subcellular location">
    <subcellularLocation>
        <location evidence="4">Secreted</location>
    </subcellularLocation>
</comment>
<comment type="tissue specificity">
    <text evidence="4">Expressed by the venom duct.</text>
</comment>
<comment type="domain">
    <text evidence="3">The cysteine framework is VI/VII (C-C-CC-C-C).</text>
</comment>
<comment type="domain">
    <text evidence="3">The presence of a 'disulfide through disulfide knot' structurally defines this protein as a knottin.</text>
</comment>
<comment type="similarity">
    <text evidence="3">Belongs to the conotoxin O1 superfamily.</text>
</comment>
<accession>P0DTY9</accession>
<organism>
    <name type="scientific">Californiconus californicus</name>
    <name type="common">California cone</name>
    <name type="synonym">Conus californicus</name>
    <dbReference type="NCBI Taxonomy" id="1736779"/>
    <lineage>
        <taxon>Eukaryota</taxon>
        <taxon>Metazoa</taxon>
        <taxon>Spiralia</taxon>
        <taxon>Lophotrochozoa</taxon>
        <taxon>Mollusca</taxon>
        <taxon>Gastropoda</taxon>
        <taxon>Caenogastropoda</taxon>
        <taxon>Neogastropoda</taxon>
        <taxon>Conoidea</taxon>
        <taxon>Conidae</taxon>
        <taxon>Californiconus</taxon>
    </lineage>
</organism>
<sequence>MKLTCVLIAAMLLLAVCQLDSADATETGCKKDGSWCWIPSECCIESCLITCWY</sequence>
<protein>
    <recommendedName>
        <fullName evidence="3">Conotoxin Cal6.27</fullName>
    </recommendedName>
    <alternativeName>
        <fullName evidence="2">O1_cal6.27</fullName>
    </alternativeName>
</protein>
<dbReference type="SMR" id="P0DTY9"/>
<dbReference type="GO" id="GO:0005576">
    <property type="term" value="C:extracellular region"/>
    <property type="evidence" value="ECO:0007669"/>
    <property type="project" value="UniProtKB-SubCell"/>
</dbReference>
<dbReference type="GO" id="GO:0090729">
    <property type="term" value="F:toxin activity"/>
    <property type="evidence" value="ECO:0007669"/>
    <property type="project" value="UniProtKB-KW"/>
</dbReference>
<proteinExistence type="inferred from homology"/>
<evidence type="ECO:0000255" key="1"/>
<evidence type="ECO:0000303" key="2">
    <source>
    </source>
</evidence>
<evidence type="ECO:0000305" key="3"/>
<evidence type="ECO:0000305" key="4">
    <source>
    </source>
</evidence>
<keyword id="KW-1015">Disulfide bond</keyword>
<keyword id="KW-0960">Knottin</keyword>
<keyword id="KW-0528">Neurotoxin</keyword>
<keyword id="KW-0964">Secreted</keyword>
<keyword id="KW-0732">Signal</keyword>
<keyword id="KW-0800">Toxin</keyword>
<name>O1627_CONCL</name>
<feature type="signal peptide" evidence="1">
    <location>
        <begin position="1"/>
        <end position="24"/>
    </location>
</feature>
<feature type="peptide" id="PRO_0000450971" description="Conotoxin Cal6.27">
    <location>
        <begin position="25"/>
        <end position="53"/>
    </location>
</feature>
<feature type="disulfide bond" evidence="3">
    <location>
        <begin position="29"/>
        <end position="43"/>
    </location>
</feature>
<feature type="disulfide bond" evidence="3">
    <location>
        <begin position="36"/>
        <end position="47"/>
    </location>
</feature>
<feature type="disulfide bond" evidence="3">
    <location>
        <begin position="42"/>
        <end position="51"/>
    </location>
</feature>
<reference key="1">
    <citation type="journal article" date="2019" name="Toxins">
        <title>The diversified O-superfamily in Californiconus californicus presents a conotoxin with antimycobacterial activity.</title>
        <authorList>
            <person name="Bernaldez-Sarabia J."/>
            <person name="Figueroa-Montiel A."/>
            <person name="Duenas S."/>
            <person name="Cervantes-Luevano K."/>
            <person name="Beltran J.A."/>
            <person name="Ortiz E."/>
            <person name="Jimenez S."/>
            <person name="Possani L.D."/>
            <person name="Paniagua-Solis J.F."/>
            <person name="Gonzalez-Canudas J."/>
            <person name="Licea-Navarro A."/>
        </authorList>
    </citation>
    <scope>NUCLEOTIDE SEQUENCE [MRNA]</scope>
    <source>
        <tissue>Venom duct</tissue>
    </source>
</reference>